<name>SC24B_HUMAN</name>
<keyword id="KW-0002">3D-structure</keyword>
<keyword id="KW-0007">Acetylation</keyword>
<keyword id="KW-0025">Alternative splicing</keyword>
<keyword id="KW-0963">Cytoplasm</keyword>
<keyword id="KW-0968">Cytoplasmic vesicle</keyword>
<keyword id="KW-0256">Endoplasmic reticulum</keyword>
<keyword id="KW-0931">ER-Golgi transport</keyword>
<keyword id="KW-0472">Membrane</keyword>
<keyword id="KW-0479">Metal-binding</keyword>
<keyword id="KW-0597">Phosphoprotein</keyword>
<keyword id="KW-0653">Protein transport</keyword>
<keyword id="KW-1267">Proteomics identification</keyword>
<keyword id="KW-1185">Reference proteome</keyword>
<keyword id="KW-0813">Transport</keyword>
<keyword id="KW-0862">Zinc</keyword>
<protein>
    <recommendedName>
        <fullName evidence="11">Protein transport protein Sec24B</fullName>
    </recommendedName>
    <alternativeName>
        <fullName>SEC24-related protein B</fullName>
    </alternativeName>
</protein>
<dbReference type="EMBL" id="AJ131245">
    <property type="protein sequence ID" value="CAA10335.1"/>
    <property type="status" value="ALT_FRAME"/>
    <property type="molecule type" value="mRNA"/>
</dbReference>
<dbReference type="EMBL" id="AC105314">
    <property type="status" value="NOT_ANNOTATED_CDS"/>
    <property type="molecule type" value="Genomic_DNA"/>
</dbReference>
<dbReference type="EMBL" id="AC138782">
    <property type="status" value="NOT_ANNOTATED_CDS"/>
    <property type="molecule type" value="Genomic_DNA"/>
</dbReference>
<dbReference type="EMBL" id="BC040137">
    <property type="protein sequence ID" value="AAH40137.1"/>
    <property type="molecule type" value="mRNA"/>
</dbReference>
<dbReference type="EMBL" id="BC117135">
    <property type="protein sequence ID" value="AAI17136.1"/>
    <property type="molecule type" value="mRNA"/>
</dbReference>
<dbReference type="EMBL" id="BC143268">
    <property type="protein sequence ID" value="AAI43269.1"/>
    <property type="molecule type" value="mRNA"/>
</dbReference>
<dbReference type="EMBL" id="BC143276">
    <property type="protein sequence ID" value="AAI43277.1"/>
    <property type="molecule type" value="mRNA"/>
</dbReference>
<dbReference type="CCDS" id="CCDS43260.1">
    <molecule id="O95487-2"/>
</dbReference>
<dbReference type="CCDS" id="CCDS47124.1">
    <molecule id="O95487-1"/>
</dbReference>
<dbReference type="CCDS" id="CCDS75179.1">
    <molecule id="O95487-3"/>
</dbReference>
<dbReference type="RefSeq" id="NP_001036199.1">
    <molecule id="O95487-2"/>
    <property type="nucleotide sequence ID" value="NM_001042734.4"/>
</dbReference>
<dbReference type="RefSeq" id="NP_001287742.1">
    <molecule id="O95487-3"/>
    <property type="nucleotide sequence ID" value="NM_001300813.3"/>
</dbReference>
<dbReference type="RefSeq" id="NP_001305014.1">
    <property type="nucleotide sequence ID" value="NM_001318085.1"/>
</dbReference>
<dbReference type="RefSeq" id="NP_001305015.1">
    <property type="nucleotide sequence ID" value="NM_001318086.1"/>
</dbReference>
<dbReference type="RefSeq" id="NP_006314.2">
    <molecule id="O95487-1"/>
    <property type="nucleotide sequence ID" value="NM_006323.5"/>
</dbReference>
<dbReference type="PDB" id="3EH1">
    <property type="method" value="X-ray"/>
    <property type="resolution" value="1.80 A"/>
    <property type="chains" value="A=518-1268"/>
</dbReference>
<dbReference type="PDBsum" id="3EH1"/>
<dbReference type="SMR" id="O95487"/>
<dbReference type="BioGRID" id="115696">
    <property type="interactions" value="256"/>
</dbReference>
<dbReference type="ComplexPortal" id="CPX-2360">
    <property type="entry name" value="COPII vesicle coat complex"/>
</dbReference>
<dbReference type="CORUM" id="O95487"/>
<dbReference type="FunCoup" id="O95487">
    <property type="interactions" value="3170"/>
</dbReference>
<dbReference type="IntAct" id="O95487">
    <property type="interactions" value="94"/>
</dbReference>
<dbReference type="MINT" id="O95487"/>
<dbReference type="STRING" id="9606.ENSP00000428564"/>
<dbReference type="GlyCosmos" id="O95487">
    <property type="glycosylation" value="31 sites, 2 glycans"/>
</dbReference>
<dbReference type="GlyGen" id="O95487">
    <property type="glycosylation" value="46 sites, 3 O-linked glycans (46 sites)"/>
</dbReference>
<dbReference type="iPTMnet" id="O95487"/>
<dbReference type="PhosphoSitePlus" id="O95487"/>
<dbReference type="SwissPalm" id="O95487"/>
<dbReference type="BioMuta" id="SEC24B"/>
<dbReference type="jPOST" id="O95487"/>
<dbReference type="MassIVE" id="O95487"/>
<dbReference type="PaxDb" id="9606-ENSP00000428564"/>
<dbReference type="PeptideAtlas" id="O95487"/>
<dbReference type="ProteomicsDB" id="50915">
    <molecule id="O95487-1"/>
</dbReference>
<dbReference type="ProteomicsDB" id="50916">
    <molecule id="O95487-2"/>
</dbReference>
<dbReference type="ProteomicsDB" id="7184"/>
<dbReference type="Pumba" id="O95487"/>
<dbReference type="Antibodypedia" id="48510">
    <property type="antibodies" value="33 antibodies from 12 providers"/>
</dbReference>
<dbReference type="DNASU" id="10427"/>
<dbReference type="Ensembl" id="ENST00000265175.5">
    <molecule id="O95487-1"/>
    <property type="protein sequence ID" value="ENSP00000265175.4"/>
    <property type="gene ID" value="ENSG00000138802.11"/>
</dbReference>
<dbReference type="Ensembl" id="ENST00000399100.6">
    <molecule id="O95487-2"/>
    <property type="protein sequence ID" value="ENSP00000382051.2"/>
    <property type="gene ID" value="ENSG00000138802.11"/>
</dbReference>
<dbReference type="Ensembl" id="ENST00000504968.6">
    <molecule id="O95487-3"/>
    <property type="protein sequence ID" value="ENSP00000428564.1"/>
    <property type="gene ID" value="ENSG00000138802.11"/>
</dbReference>
<dbReference type="GeneID" id="10427"/>
<dbReference type="KEGG" id="hsa:10427"/>
<dbReference type="MANE-Select" id="ENST00000265175.5">
    <property type="protein sequence ID" value="ENSP00000265175.4"/>
    <property type="RefSeq nucleotide sequence ID" value="NM_006323.5"/>
    <property type="RefSeq protein sequence ID" value="NP_006314.2"/>
</dbReference>
<dbReference type="UCSC" id="uc003hzk.4">
    <molecule id="O95487-1"/>
    <property type="organism name" value="human"/>
</dbReference>
<dbReference type="AGR" id="HGNC:10704"/>
<dbReference type="CTD" id="10427"/>
<dbReference type="DisGeNET" id="10427"/>
<dbReference type="GeneCards" id="SEC24B"/>
<dbReference type="HGNC" id="HGNC:10704">
    <property type="gene designation" value="SEC24B"/>
</dbReference>
<dbReference type="HPA" id="ENSG00000138802">
    <property type="expression patterns" value="Low tissue specificity"/>
</dbReference>
<dbReference type="MIM" id="607184">
    <property type="type" value="gene"/>
</dbReference>
<dbReference type="neXtProt" id="NX_O95487"/>
<dbReference type="OpenTargets" id="ENSG00000138802"/>
<dbReference type="PharmGKB" id="PA35627"/>
<dbReference type="VEuPathDB" id="HostDB:ENSG00000138802"/>
<dbReference type="eggNOG" id="KOG1985">
    <property type="taxonomic scope" value="Eukaryota"/>
</dbReference>
<dbReference type="GeneTree" id="ENSGT00950000182924"/>
<dbReference type="HOGENOM" id="CLU_004589_2_0_1"/>
<dbReference type="InParanoid" id="O95487"/>
<dbReference type="OMA" id="QPPPFQM"/>
<dbReference type="OrthoDB" id="49016at2759"/>
<dbReference type="PAN-GO" id="O95487">
    <property type="GO annotations" value="5 GO annotations based on evolutionary models"/>
</dbReference>
<dbReference type="PhylomeDB" id="O95487"/>
<dbReference type="TreeFam" id="TF354244"/>
<dbReference type="PathwayCommons" id="O95487"/>
<dbReference type="Reactome" id="R-HSA-1655829">
    <property type="pathway name" value="Regulation of cholesterol biosynthesis by SREBP (SREBF)"/>
</dbReference>
<dbReference type="Reactome" id="R-HSA-204005">
    <property type="pathway name" value="COPII-mediated vesicle transport"/>
</dbReference>
<dbReference type="Reactome" id="R-HSA-2132295">
    <property type="pathway name" value="MHC class II antigen presentation"/>
</dbReference>
<dbReference type="Reactome" id="R-HSA-5694530">
    <property type="pathway name" value="Cargo concentration in the ER"/>
</dbReference>
<dbReference type="Reactome" id="R-HSA-9705671">
    <property type="pathway name" value="SARS-CoV-2 activates/modulates innate and adaptive immune responses"/>
</dbReference>
<dbReference type="Reactome" id="R-HSA-983170">
    <property type="pathway name" value="Antigen Presentation: Folding, assembly and peptide loading of class I MHC"/>
</dbReference>
<dbReference type="SignaLink" id="O95487"/>
<dbReference type="SIGNOR" id="O95487"/>
<dbReference type="BioGRID-ORCS" id="10427">
    <property type="hits" value="20 hits in 1155 CRISPR screens"/>
</dbReference>
<dbReference type="ChiTaRS" id="SEC24B">
    <property type="organism name" value="human"/>
</dbReference>
<dbReference type="EvolutionaryTrace" id="O95487"/>
<dbReference type="GeneWiki" id="SEC24B"/>
<dbReference type="GenomeRNAi" id="10427"/>
<dbReference type="Pharos" id="O95487">
    <property type="development level" value="Tbio"/>
</dbReference>
<dbReference type="PRO" id="PR:O95487"/>
<dbReference type="Proteomes" id="UP000005640">
    <property type="component" value="Chromosome 4"/>
</dbReference>
<dbReference type="RNAct" id="O95487">
    <property type="molecule type" value="protein"/>
</dbReference>
<dbReference type="Bgee" id="ENSG00000138802">
    <property type="expression patterns" value="Expressed in cartilage tissue and 217 other cell types or tissues"/>
</dbReference>
<dbReference type="GO" id="GO:0030127">
    <property type="term" value="C:COPII vesicle coat"/>
    <property type="evidence" value="ECO:0000314"/>
    <property type="project" value="UniProtKB"/>
</dbReference>
<dbReference type="GO" id="GO:0005829">
    <property type="term" value="C:cytosol"/>
    <property type="evidence" value="ECO:0000314"/>
    <property type="project" value="UniProtKB"/>
</dbReference>
<dbReference type="GO" id="GO:0070971">
    <property type="term" value="C:endoplasmic reticulum exit site"/>
    <property type="evidence" value="ECO:0000318"/>
    <property type="project" value="GO_Central"/>
</dbReference>
<dbReference type="GO" id="GO:0005789">
    <property type="term" value="C:endoplasmic reticulum membrane"/>
    <property type="evidence" value="ECO:0000304"/>
    <property type="project" value="Reactome"/>
</dbReference>
<dbReference type="GO" id="GO:0012507">
    <property type="term" value="C:ER to Golgi transport vesicle membrane"/>
    <property type="evidence" value="ECO:0000304"/>
    <property type="project" value="Reactome"/>
</dbReference>
<dbReference type="GO" id="GO:0000149">
    <property type="term" value="F:SNARE binding"/>
    <property type="evidence" value="ECO:0000318"/>
    <property type="project" value="GO_Central"/>
</dbReference>
<dbReference type="GO" id="GO:0008270">
    <property type="term" value="F:zinc ion binding"/>
    <property type="evidence" value="ECO:0000314"/>
    <property type="project" value="UniProtKB"/>
</dbReference>
<dbReference type="GO" id="GO:0035909">
    <property type="term" value="P:aorta morphogenesis"/>
    <property type="evidence" value="ECO:0007669"/>
    <property type="project" value="Ensembl"/>
</dbReference>
<dbReference type="GO" id="GO:0060088">
    <property type="term" value="P:auditory receptor cell stereocilium organization"/>
    <property type="evidence" value="ECO:0007669"/>
    <property type="project" value="Ensembl"/>
</dbReference>
<dbReference type="GO" id="GO:0021747">
    <property type="term" value="P:cochlear nucleus development"/>
    <property type="evidence" value="ECO:0007669"/>
    <property type="project" value="Ensembl"/>
</dbReference>
<dbReference type="GO" id="GO:0090110">
    <property type="term" value="P:COPII-coated vesicle cargo loading"/>
    <property type="evidence" value="ECO:0000314"/>
    <property type="project" value="UniProtKB"/>
</dbReference>
<dbReference type="GO" id="GO:0060982">
    <property type="term" value="P:coronary artery morphogenesis"/>
    <property type="evidence" value="ECO:0007669"/>
    <property type="project" value="Ensembl"/>
</dbReference>
<dbReference type="GO" id="GO:0006888">
    <property type="term" value="P:endoplasmic reticulum to Golgi vesicle-mediated transport"/>
    <property type="evidence" value="ECO:0000315"/>
    <property type="project" value="UniProtKB"/>
</dbReference>
<dbReference type="GO" id="GO:0006886">
    <property type="term" value="P:intracellular protein transport"/>
    <property type="evidence" value="ECO:0007669"/>
    <property type="project" value="InterPro"/>
</dbReference>
<dbReference type="GO" id="GO:0060463">
    <property type="term" value="P:lung lobe morphogenesis"/>
    <property type="evidence" value="ECO:0007669"/>
    <property type="project" value="Ensembl"/>
</dbReference>
<dbReference type="GO" id="GO:0001843">
    <property type="term" value="P:neural tube closure"/>
    <property type="evidence" value="ECO:0007669"/>
    <property type="project" value="Ensembl"/>
</dbReference>
<dbReference type="GO" id="GO:0003151">
    <property type="term" value="P:outflow tract morphogenesis"/>
    <property type="evidence" value="ECO:0007669"/>
    <property type="project" value="Ensembl"/>
</dbReference>
<dbReference type="GO" id="GO:0061156">
    <property type="term" value="P:pulmonary artery morphogenesis"/>
    <property type="evidence" value="ECO:0007669"/>
    <property type="project" value="Ensembl"/>
</dbReference>
<dbReference type="GO" id="GO:1901301">
    <property type="term" value="P:regulation of cargo loading into COPII-coated vesicle"/>
    <property type="evidence" value="ECO:0007669"/>
    <property type="project" value="Ensembl"/>
</dbReference>
<dbReference type="GO" id="GO:0090178">
    <property type="term" value="P:regulation of establishment of planar polarity involved in neural tube closure"/>
    <property type="evidence" value="ECO:0007669"/>
    <property type="project" value="Ensembl"/>
</dbReference>
<dbReference type="CDD" id="cd01479">
    <property type="entry name" value="Sec24-like"/>
    <property type="match status" value="1"/>
</dbReference>
<dbReference type="FunFam" id="2.30.30.380:FF:000004">
    <property type="entry name" value="SEC24 homolog B, COPII coat complex component"/>
    <property type="match status" value="1"/>
</dbReference>
<dbReference type="FunFam" id="3.40.20.10:FF:000029">
    <property type="entry name" value="SEC24 homolog B, COPII coat complex component"/>
    <property type="match status" value="1"/>
</dbReference>
<dbReference type="FunFam" id="3.40.50.410:FF:000019">
    <property type="entry name" value="SEC24 homolog B, COPII coat complex component"/>
    <property type="match status" value="1"/>
</dbReference>
<dbReference type="Gene3D" id="2.60.40.1670">
    <property type="entry name" value="beta-sandwich domain of Sec23/24"/>
    <property type="match status" value="1"/>
</dbReference>
<dbReference type="Gene3D" id="1.20.120.730">
    <property type="entry name" value="Sec23/Sec24 helical domain"/>
    <property type="match status" value="1"/>
</dbReference>
<dbReference type="Gene3D" id="3.40.20.10">
    <property type="entry name" value="Severin"/>
    <property type="match status" value="1"/>
</dbReference>
<dbReference type="Gene3D" id="3.40.50.410">
    <property type="entry name" value="von Willebrand factor, type A domain"/>
    <property type="match status" value="1"/>
</dbReference>
<dbReference type="Gene3D" id="2.30.30.380">
    <property type="entry name" value="Zn-finger domain of Sec23/24"/>
    <property type="match status" value="1"/>
</dbReference>
<dbReference type="InterPro" id="IPR029006">
    <property type="entry name" value="ADF-H/Gelsolin-like_dom_sf"/>
</dbReference>
<dbReference type="InterPro" id="IPR007123">
    <property type="entry name" value="Gelsolin-like_dom"/>
</dbReference>
<dbReference type="InterPro" id="IPR036180">
    <property type="entry name" value="Gelsolin-like_dom_sf"/>
</dbReference>
<dbReference type="InterPro" id="IPR006900">
    <property type="entry name" value="Sec23/24_helical_dom"/>
</dbReference>
<dbReference type="InterPro" id="IPR036175">
    <property type="entry name" value="Sec23/24_helical_dom_sf"/>
</dbReference>
<dbReference type="InterPro" id="IPR006896">
    <property type="entry name" value="Sec23/24_trunk_dom"/>
</dbReference>
<dbReference type="InterPro" id="IPR012990">
    <property type="entry name" value="Sec23_24_beta_S"/>
</dbReference>
<dbReference type="InterPro" id="IPR050550">
    <property type="entry name" value="SEC23_SEC24_subfamily"/>
</dbReference>
<dbReference type="InterPro" id="IPR041742">
    <property type="entry name" value="Sec24-like_trunk_dom"/>
</dbReference>
<dbReference type="InterPro" id="IPR036465">
    <property type="entry name" value="vWFA_dom_sf"/>
</dbReference>
<dbReference type="InterPro" id="IPR006895">
    <property type="entry name" value="Znf_Sec23_Sec24"/>
</dbReference>
<dbReference type="InterPro" id="IPR036174">
    <property type="entry name" value="Znf_Sec23_Sec24_sf"/>
</dbReference>
<dbReference type="PANTHER" id="PTHR13803:SF42">
    <property type="entry name" value="PROTEIN TRANSPORT PROTEIN SEC24B"/>
    <property type="match status" value="1"/>
</dbReference>
<dbReference type="PANTHER" id="PTHR13803">
    <property type="entry name" value="SEC24-RELATED PROTEIN"/>
    <property type="match status" value="1"/>
</dbReference>
<dbReference type="Pfam" id="PF00626">
    <property type="entry name" value="Gelsolin"/>
    <property type="match status" value="1"/>
</dbReference>
<dbReference type="Pfam" id="PF08033">
    <property type="entry name" value="Sec23_BS"/>
    <property type="match status" value="1"/>
</dbReference>
<dbReference type="Pfam" id="PF04815">
    <property type="entry name" value="Sec23_helical"/>
    <property type="match status" value="1"/>
</dbReference>
<dbReference type="Pfam" id="PF04811">
    <property type="entry name" value="Sec23_trunk"/>
    <property type="match status" value="1"/>
</dbReference>
<dbReference type="Pfam" id="PF04810">
    <property type="entry name" value="zf-Sec23_Sec24"/>
    <property type="match status" value="1"/>
</dbReference>
<dbReference type="SUPFAM" id="SSF81995">
    <property type="entry name" value="beta-sandwich domain of Sec23/24"/>
    <property type="match status" value="1"/>
</dbReference>
<dbReference type="SUPFAM" id="SSF82754">
    <property type="entry name" value="C-terminal, gelsolin-like domain of Sec23/24"/>
    <property type="match status" value="1"/>
</dbReference>
<dbReference type="SUPFAM" id="SSF81811">
    <property type="entry name" value="Helical domain of Sec23/24"/>
    <property type="match status" value="1"/>
</dbReference>
<dbReference type="SUPFAM" id="SSF53300">
    <property type="entry name" value="vWA-like"/>
    <property type="match status" value="1"/>
</dbReference>
<dbReference type="SUPFAM" id="SSF82919">
    <property type="entry name" value="Zn-finger domain of Sec23/24"/>
    <property type="match status" value="1"/>
</dbReference>
<feature type="initiator methionine" description="Removed" evidence="16">
    <location>
        <position position="1"/>
    </location>
</feature>
<feature type="chain" id="PRO_0000205155" description="Protein transport protein Sec24B">
    <location>
        <begin position="2"/>
        <end position="1268"/>
    </location>
</feature>
<feature type="repeat" description="Gelsolin-like" evidence="1">
    <location>
        <begin position="1141"/>
        <end position="1213"/>
    </location>
</feature>
<feature type="region of interest" description="Disordered" evidence="2">
    <location>
        <begin position="1"/>
        <end position="71"/>
    </location>
</feature>
<feature type="region of interest" description="Disordered" evidence="2">
    <location>
        <begin position="216"/>
        <end position="263"/>
    </location>
</feature>
<feature type="region of interest" description="Disordered" evidence="2">
    <location>
        <begin position="303"/>
        <end position="345"/>
    </location>
</feature>
<feature type="region of interest" description="Disordered" evidence="2">
    <location>
        <begin position="362"/>
        <end position="451"/>
    </location>
</feature>
<feature type="region of interest" description="Zinc finger-like">
    <location>
        <begin position="605"/>
        <end position="629"/>
    </location>
</feature>
<feature type="compositionally biased region" description="Low complexity" evidence="2">
    <location>
        <begin position="1"/>
        <end position="14"/>
    </location>
</feature>
<feature type="compositionally biased region" description="Low complexity" evidence="2">
    <location>
        <begin position="21"/>
        <end position="48"/>
    </location>
</feature>
<feature type="compositionally biased region" description="Polar residues" evidence="2">
    <location>
        <begin position="225"/>
        <end position="234"/>
    </location>
</feature>
<feature type="compositionally biased region" description="Low complexity" evidence="2">
    <location>
        <begin position="245"/>
        <end position="255"/>
    </location>
</feature>
<feature type="compositionally biased region" description="Low complexity" evidence="2">
    <location>
        <begin position="311"/>
        <end position="332"/>
    </location>
</feature>
<feature type="compositionally biased region" description="Low complexity" evidence="2">
    <location>
        <begin position="365"/>
        <end position="375"/>
    </location>
</feature>
<feature type="compositionally biased region" description="Acidic residues" evidence="2">
    <location>
        <begin position="376"/>
        <end position="389"/>
    </location>
</feature>
<feature type="compositionally biased region" description="Pro residues" evidence="2">
    <location>
        <begin position="426"/>
        <end position="450"/>
    </location>
</feature>
<feature type="binding site" evidence="14">
    <location>
        <position position="605"/>
    </location>
    <ligand>
        <name>Zn(2+)</name>
        <dbReference type="ChEBI" id="CHEBI:29105"/>
    </ligand>
</feature>
<feature type="binding site" evidence="14">
    <location>
        <position position="608"/>
    </location>
    <ligand>
        <name>Zn(2+)</name>
        <dbReference type="ChEBI" id="CHEBI:29105"/>
    </ligand>
</feature>
<feature type="binding site" evidence="14">
    <location>
        <position position="626"/>
    </location>
    <ligand>
        <name>Zn(2+)</name>
        <dbReference type="ChEBI" id="CHEBI:29105"/>
    </ligand>
</feature>
<feature type="binding site" evidence="14">
    <location>
        <position position="629"/>
    </location>
    <ligand>
        <name>Zn(2+)</name>
        <dbReference type="ChEBI" id="CHEBI:29105"/>
    </ligand>
</feature>
<feature type="modified residue" description="N-acetylserine" evidence="16">
    <location>
        <position position="2"/>
    </location>
</feature>
<feature type="modified residue" description="Phosphothreonine" evidence="17">
    <location>
        <position position="329"/>
    </location>
</feature>
<feature type="modified residue" description="Phosphoserine" evidence="15 17 18">
    <location>
        <position position="1224"/>
    </location>
</feature>
<feature type="splice variant" id="VSP_054432" description="In isoform 3." evidence="10">
    <original>N</original>
    <variation>NETGFHHVAQASLELLDPSNLPASASQIAGST</variation>
    <location>
        <position position="44"/>
    </location>
</feature>
<feature type="splice variant" id="VSP_035987" description="In isoform 2." evidence="10">
    <location>
        <begin position="354"/>
        <end position="388"/>
    </location>
</feature>
<feature type="splice variant" id="VSP_054433" description="In isoform 3." evidence="10">
    <location>
        <position position="496"/>
    </location>
</feature>
<feature type="sequence variant" id="VAR_047934" description="In dbSNP:rs35705351.">
    <original>A</original>
    <variation>G</variation>
    <location>
        <position position="456"/>
    </location>
</feature>
<feature type="mutagenesis site" description="Decreased ability to package the SNARE SEC22B cargo into COPII vesicles. Has no effect on other cargos packaging." evidence="4">
    <original>R</original>
    <variation>A</variation>
    <location>
        <position position="715"/>
    </location>
</feature>
<feature type="sequence conflict" description="In Ref. 1; CAA10335." evidence="11" ref="1">
    <original>A</original>
    <variation>S</variation>
    <location>
        <position position="23"/>
    </location>
</feature>
<feature type="helix" evidence="19">
    <location>
        <begin position="520"/>
        <end position="522"/>
    </location>
</feature>
<feature type="strand" evidence="19">
    <location>
        <begin position="524"/>
        <end position="526"/>
    </location>
</feature>
<feature type="turn" evidence="19">
    <location>
        <begin position="527"/>
        <end position="529"/>
    </location>
</feature>
<feature type="helix" evidence="19">
    <location>
        <begin position="548"/>
        <end position="553"/>
    </location>
</feature>
<feature type="turn" evidence="19">
    <location>
        <begin position="557"/>
        <end position="559"/>
    </location>
</feature>
<feature type="strand" evidence="19">
    <location>
        <begin position="560"/>
        <end position="570"/>
    </location>
</feature>
<feature type="helix" evidence="19">
    <location>
        <begin position="571"/>
        <end position="577"/>
    </location>
</feature>
<feature type="strand" evidence="19">
    <location>
        <begin position="582"/>
        <end position="585"/>
    </location>
</feature>
<feature type="turn" evidence="19">
    <location>
        <begin position="606"/>
        <end position="608"/>
    </location>
</feature>
<feature type="strand" evidence="19">
    <location>
        <begin position="617"/>
        <end position="625"/>
    </location>
</feature>
<feature type="turn" evidence="19">
    <location>
        <begin position="627"/>
        <end position="629"/>
    </location>
</feature>
<feature type="strand" evidence="19">
    <location>
        <begin position="632"/>
        <end position="634"/>
    </location>
</feature>
<feature type="helix" evidence="19">
    <location>
        <begin position="637"/>
        <end position="639"/>
    </location>
</feature>
<feature type="helix" evidence="19">
    <location>
        <begin position="651"/>
        <end position="653"/>
    </location>
</feature>
<feature type="helix" evidence="19">
    <location>
        <begin position="655"/>
        <end position="658"/>
    </location>
</feature>
<feature type="strand" evidence="19">
    <location>
        <begin position="660"/>
        <end position="666"/>
    </location>
</feature>
<feature type="helix" evidence="19">
    <location>
        <begin position="668"/>
        <end position="670"/>
    </location>
</feature>
<feature type="strand" evidence="19">
    <location>
        <begin position="672"/>
        <end position="674"/>
    </location>
</feature>
<feature type="strand" evidence="19">
    <location>
        <begin position="679"/>
        <end position="685"/>
    </location>
</feature>
<feature type="helix" evidence="19">
    <location>
        <begin position="688"/>
        <end position="693"/>
    </location>
</feature>
<feature type="helix" evidence="19">
    <location>
        <begin position="695"/>
        <end position="706"/>
    </location>
</feature>
<feature type="turn" evidence="19">
    <location>
        <begin position="707"/>
        <end position="709"/>
    </location>
</feature>
<feature type="strand" evidence="19">
    <location>
        <begin position="717"/>
        <end position="731"/>
    </location>
</feature>
<feature type="strand" evidence="19">
    <location>
        <begin position="740"/>
        <end position="745"/>
    </location>
</feature>
<feature type="helix" evidence="19">
    <location>
        <begin position="755"/>
        <end position="757"/>
    </location>
</feature>
<feature type="strand" evidence="19">
    <location>
        <begin position="759"/>
        <end position="761"/>
    </location>
</feature>
<feature type="turn" evidence="19">
    <location>
        <begin position="762"/>
        <end position="765"/>
    </location>
</feature>
<feature type="helix" evidence="19">
    <location>
        <begin position="766"/>
        <end position="775"/>
    </location>
</feature>
<feature type="helix" evidence="19">
    <location>
        <begin position="776"/>
        <end position="778"/>
    </location>
</feature>
<feature type="helix" evidence="19">
    <location>
        <begin position="790"/>
        <end position="801"/>
    </location>
</feature>
<feature type="turn" evidence="19">
    <location>
        <begin position="802"/>
        <end position="804"/>
    </location>
</feature>
<feature type="strand" evidence="19">
    <location>
        <begin position="806"/>
        <end position="812"/>
    </location>
</feature>
<feature type="helix" evidence="19">
    <location>
        <begin position="831"/>
        <end position="834"/>
    </location>
</feature>
<feature type="strand" evidence="19">
    <location>
        <begin position="835"/>
        <end position="837"/>
    </location>
</feature>
<feature type="helix" evidence="19">
    <location>
        <begin position="847"/>
        <end position="857"/>
    </location>
</feature>
<feature type="strand" evidence="19">
    <location>
        <begin position="860"/>
        <end position="866"/>
    </location>
</feature>
<feature type="helix" evidence="19">
    <location>
        <begin position="874"/>
        <end position="877"/>
    </location>
</feature>
<feature type="helix" evidence="19">
    <location>
        <begin position="879"/>
        <end position="882"/>
    </location>
</feature>
<feature type="turn" evidence="19">
    <location>
        <begin position="883"/>
        <end position="885"/>
    </location>
</feature>
<feature type="strand" evidence="19">
    <location>
        <begin position="888"/>
        <end position="890"/>
    </location>
</feature>
<feature type="turn" evidence="19">
    <location>
        <begin position="896"/>
        <end position="898"/>
    </location>
</feature>
<feature type="helix" evidence="19">
    <location>
        <begin position="900"/>
        <end position="915"/>
    </location>
</feature>
<feature type="strand" evidence="19">
    <location>
        <begin position="919"/>
        <end position="928"/>
    </location>
</feature>
<feature type="strand" evidence="19">
    <location>
        <begin position="932"/>
        <end position="943"/>
    </location>
</feature>
<feature type="strand" evidence="19">
    <location>
        <begin position="945"/>
        <end position="954"/>
    </location>
</feature>
<feature type="strand" evidence="19">
    <location>
        <begin position="960"/>
        <end position="968"/>
    </location>
</feature>
<feature type="strand" evidence="19">
    <location>
        <begin position="974"/>
        <end position="985"/>
    </location>
</feature>
<feature type="strand" evidence="19">
    <location>
        <begin position="991"/>
        <end position="1003"/>
    </location>
</feature>
<feature type="helix" evidence="19">
    <location>
        <begin position="1006"/>
        <end position="1011"/>
    </location>
</feature>
<feature type="helix" evidence="19">
    <location>
        <begin position="1015"/>
        <end position="1032"/>
    </location>
</feature>
<feature type="helix" evidence="19">
    <location>
        <begin position="1035"/>
        <end position="1054"/>
    </location>
</feature>
<feature type="strand" evidence="19">
    <location>
        <begin position="1066"/>
        <end position="1068"/>
    </location>
</feature>
<feature type="helix" evidence="19">
    <location>
        <begin position="1069"/>
        <end position="1071"/>
    </location>
</feature>
<feature type="helix" evidence="19">
    <location>
        <begin position="1074"/>
        <end position="1082"/>
    </location>
</feature>
<feature type="turn" evidence="19">
    <location>
        <begin position="1085"/>
        <end position="1087"/>
    </location>
</feature>
<feature type="helix" evidence="19">
    <location>
        <begin position="1095"/>
        <end position="1107"/>
    </location>
</feature>
<feature type="helix" evidence="19">
    <location>
        <begin position="1110"/>
        <end position="1117"/>
    </location>
</feature>
<feature type="strand" evidence="19">
    <location>
        <begin position="1120"/>
        <end position="1123"/>
    </location>
</feature>
<feature type="strand" evidence="19">
    <location>
        <begin position="1133"/>
        <end position="1135"/>
    </location>
</feature>
<feature type="strand" evidence="19">
    <location>
        <begin position="1138"/>
        <end position="1140"/>
    </location>
</feature>
<feature type="helix" evidence="19">
    <location>
        <begin position="1150"/>
        <end position="1152"/>
    </location>
</feature>
<feature type="strand" evidence="19">
    <location>
        <begin position="1157"/>
        <end position="1162"/>
    </location>
</feature>
<feature type="strand" evidence="19">
    <location>
        <begin position="1164"/>
        <end position="1171"/>
    </location>
</feature>
<feature type="helix" evidence="19">
    <location>
        <begin position="1177"/>
        <end position="1182"/>
    </location>
</feature>
<feature type="helix" evidence="19">
    <location>
        <begin position="1189"/>
        <end position="1191"/>
    </location>
</feature>
<feature type="strand" evidence="19">
    <location>
        <begin position="1194"/>
        <end position="1196"/>
    </location>
</feature>
<feature type="helix" evidence="19">
    <location>
        <begin position="1205"/>
        <end position="1219"/>
    </location>
</feature>
<feature type="strand" evidence="19">
    <location>
        <begin position="1221"/>
        <end position="1223"/>
    </location>
</feature>
<feature type="strand" evidence="19">
    <location>
        <begin position="1226"/>
        <end position="1236"/>
    </location>
</feature>
<feature type="helix" evidence="19">
    <location>
        <begin position="1237"/>
        <end position="1241"/>
    </location>
</feature>
<feature type="helix" evidence="19">
    <location>
        <begin position="1255"/>
        <end position="1267"/>
    </location>
</feature>
<feature type="modified residue" description="Phosphoserine" evidence="18">
    <location sequence="O95487-3">
        <position position="55"/>
    </location>
</feature>
<organism>
    <name type="scientific">Homo sapiens</name>
    <name type="common">Human</name>
    <dbReference type="NCBI Taxonomy" id="9606"/>
    <lineage>
        <taxon>Eukaryota</taxon>
        <taxon>Metazoa</taxon>
        <taxon>Chordata</taxon>
        <taxon>Craniata</taxon>
        <taxon>Vertebrata</taxon>
        <taxon>Euteleostomi</taxon>
        <taxon>Mammalia</taxon>
        <taxon>Eutheria</taxon>
        <taxon>Euarchontoglires</taxon>
        <taxon>Primates</taxon>
        <taxon>Haplorrhini</taxon>
        <taxon>Catarrhini</taxon>
        <taxon>Hominidae</taxon>
        <taxon>Homo</taxon>
    </lineage>
</organism>
<evidence type="ECO:0000255" key="1"/>
<evidence type="ECO:0000256" key="2">
    <source>
        <dbReference type="SAM" id="MobiDB-lite"/>
    </source>
</evidence>
<evidence type="ECO:0000269" key="3">
    <source>
    </source>
</evidence>
<evidence type="ECO:0000269" key="4">
    <source>
    </source>
</evidence>
<evidence type="ECO:0000269" key="5">
    <source>
    </source>
</evidence>
<evidence type="ECO:0000269" key="6">
    <source>
    </source>
</evidence>
<evidence type="ECO:0000269" key="7">
    <source>
    </source>
</evidence>
<evidence type="ECO:0000269" key="8">
    <source>
    </source>
</evidence>
<evidence type="ECO:0000269" key="9">
    <source>
    </source>
</evidence>
<evidence type="ECO:0000303" key="10">
    <source>
    </source>
</evidence>
<evidence type="ECO:0000305" key="11"/>
<evidence type="ECO:0000305" key="12">
    <source>
    </source>
</evidence>
<evidence type="ECO:0000312" key="13">
    <source>
        <dbReference type="HGNC" id="HGNC:10704"/>
    </source>
</evidence>
<evidence type="ECO:0007744" key="14">
    <source>
        <dbReference type="PDB" id="3EH1"/>
    </source>
</evidence>
<evidence type="ECO:0007744" key="15">
    <source>
    </source>
</evidence>
<evidence type="ECO:0007744" key="16">
    <source>
    </source>
</evidence>
<evidence type="ECO:0007744" key="17">
    <source>
    </source>
</evidence>
<evidence type="ECO:0007744" key="18">
    <source>
    </source>
</evidence>
<evidence type="ECO:0007829" key="19">
    <source>
        <dbReference type="PDB" id="3EH1"/>
    </source>
</evidence>
<accession>O95487</accession>
<accession>B7ZKM8</accession>
<accession>B7ZKN4</accession>
<accession>Q0VG08</accession>
<reference key="1">
    <citation type="journal article" date="1999" name="J. Biol. Chem.">
        <title>Sec24 proteins and sorting at the endoplasmic reticulum.</title>
        <authorList>
            <person name="Pagano A."/>
            <person name="Letourneur F."/>
            <person name="Garcia-Estefania D."/>
            <person name="Carpentier J.-L."/>
            <person name="Orci L."/>
            <person name="Paccaud J.-P."/>
        </authorList>
    </citation>
    <scope>NUCLEOTIDE SEQUENCE [MRNA] (ISOFORM 1)</scope>
    <scope>SUBUNIT</scope>
    <scope>SUBCELLULAR LOCATION</scope>
    <scope>TOPOLOGY</scope>
    <source>
        <tissue>B-cell</tissue>
    </source>
</reference>
<reference key="2">
    <citation type="journal article" date="2005" name="Nature">
        <title>Generation and annotation of the DNA sequences of human chromosomes 2 and 4.</title>
        <authorList>
            <person name="Hillier L.W."/>
            <person name="Graves T.A."/>
            <person name="Fulton R.S."/>
            <person name="Fulton L.A."/>
            <person name="Pepin K.H."/>
            <person name="Minx P."/>
            <person name="Wagner-McPherson C."/>
            <person name="Layman D."/>
            <person name="Wylie K."/>
            <person name="Sekhon M."/>
            <person name="Becker M.C."/>
            <person name="Fewell G.A."/>
            <person name="Delehaunty K.D."/>
            <person name="Miner T.L."/>
            <person name="Nash W.E."/>
            <person name="Kremitzki C."/>
            <person name="Oddy L."/>
            <person name="Du H."/>
            <person name="Sun H."/>
            <person name="Bradshaw-Cordum H."/>
            <person name="Ali J."/>
            <person name="Carter J."/>
            <person name="Cordes M."/>
            <person name="Harris A."/>
            <person name="Isak A."/>
            <person name="van Brunt A."/>
            <person name="Nguyen C."/>
            <person name="Du F."/>
            <person name="Courtney L."/>
            <person name="Kalicki J."/>
            <person name="Ozersky P."/>
            <person name="Abbott S."/>
            <person name="Armstrong J."/>
            <person name="Belter E.A."/>
            <person name="Caruso L."/>
            <person name="Cedroni M."/>
            <person name="Cotton M."/>
            <person name="Davidson T."/>
            <person name="Desai A."/>
            <person name="Elliott G."/>
            <person name="Erb T."/>
            <person name="Fronick C."/>
            <person name="Gaige T."/>
            <person name="Haakenson W."/>
            <person name="Haglund K."/>
            <person name="Holmes A."/>
            <person name="Harkins R."/>
            <person name="Kim K."/>
            <person name="Kruchowski S.S."/>
            <person name="Strong C.M."/>
            <person name="Grewal N."/>
            <person name="Goyea E."/>
            <person name="Hou S."/>
            <person name="Levy A."/>
            <person name="Martinka S."/>
            <person name="Mead K."/>
            <person name="McLellan M.D."/>
            <person name="Meyer R."/>
            <person name="Randall-Maher J."/>
            <person name="Tomlinson C."/>
            <person name="Dauphin-Kohlberg S."/>
            <person name="Kozlowicz-Reilly A."/>
            <person name="Shah N."/>
            <person name="Swearengen-Shahid S."/>
            <person name="Snider J."/>
            <person name="Strong J.T."/>
            <person name="Thompson J."/>
            <person name="Yoakum M."/>
            <person name="Leonard S."/>
            <person name="Pearman C."/>
            <person name="Trani L."/>
            <person name="Radionenko M."/>
            <person name="Waligorski J.E."/>
            <person name="Wang C."/>
            <person name="Rock S.M."/>
            <person name="Tin-Wollam A.-M."/>
            <person name="Maupin R."/>
            <person name="Latreille P."/>
            <person name="Wendl M.C."/>
            <person name="Yang S.-P."/>
            <person name="Pohl C."/>
            <person name="Wallis J.W."/>
            <person name="Spieth J."/>
            <person name="Bieri T.A."/>
            <person name="Berkowicz N."/>
            <person name="Nelson J.O."/>
            <person name="Osborne J."/>
            <person name="Ding L."/>
            <person name="Meyer R."/>
            <person name="Sabo A."/>
            <person name="Shotland Y."/>
            <person name="Sinha P."/>
            <person name="Wohldmann P.E."/>
            <person name="Cook L.L."/>
            <person name="Hickenbotham M.T."/>
            <person name="Eldred J."/>
            <person name="Williams D."/>
            <person name="Jones T.A."/>
            <person name="She X."/>
            <person name="Ciccarelli F.D."/>
            <person name="Izaurralde E."/>
            <person name="Taylor J."/>
            <person name="Schmutz J."/>
            <person name="Myers R.M."/>
            <person name="Cox D.R."/>
            <person name="Huang X."/>
            <person name="McPherson J.D."/>
            <person name="Mardis E.R."/>
            <person name="Clifton S.W."/>
            <person name="Warren W.C."/>
            <person name="Chinwalla A.T."/>
            <person name="Eddy S.R."/>
            <person name="Marra M.A."/>
            <person name="Ovcharenko I."/>
            <person name="Furey T.S."/>
            <person name="Miller W."/>
            <person name="Eichler E.E."/>
            <person name="Bork P."/>
            <person name="Suyama M."/>
            <person name="Torrents D."/>
            <person name="Waterston R.H."/>
            <person name="Wilson R.K."/>
        </authorList>
    </citation>
    <scope>NUCLEOTIDE SEQUENCE [LARGE SCALE GENOMIC DNA]</scope>
</reference>
<reference key="3">
    <citation type="journal article" date="2004" name="Genome Res.">
        <title>The status, quality, and expansion of the NIH full-length cDNA project: the Mammalian Gene Collection (MGC).</title>
        <authorList>
            <consortium name="The MGC Project Team"/>
        </authorList>
    </citation>
    <scope>NUCLEOTIDE SEQUENCE [LARGE SCALE MRNA] (ISOFORMS 1; 2 AND 3)</scope>
    <source>
        <tissue>Brain</tissue>
        <tissue>Eye</tissue>
    </source>
</reference>
<reference key="4">
    <citation type="journal article" date="2006" name="Cell">
        <title>Global, in vivo, and site-specific phosphorylation dynamics in signaling networks.</title>
        <authorList>
            <person name="Olsen J.V."/>
            <person name="Blagoev B."/>
            <person name="Gnad F."/>
            <person name="Macek B."/>
            <person name="Kumar C."/>
            <person name="Mortensen P."/>
            <person name="Mann M."/>
        </authorList>
    </citation>
    <scope>PHOSPHORYLATION [LARGE SCALE ANALYSIS] AT SER-1224</scope>
    <scope>IDENTIFICATION BY MASS SPECTROMETRY [LARGE SCALE ANALYSIS]</scope>
    <source>
        <tissue>Cervix carcinoma</tissue>
    </source>
</reference>
<reference key="5">
    <citation type="journal article" date="2007" name="Mol. Cell">
        <title>The transport signal on Sec22 for packaging into COPII-coated vesicles is a conformational epitope.</title>
        <authorList>
            <person name="Mancias J.D."/>
            <person name="Goldberg J."/>
        </authorList>
    </citation>
    <scope>FUNCTION</scope>
    <scope>SUBUNIT</scope>
    <scope>INTERACTION WITH SEC22B</scope>
    <scope>MUTAGENESIS OF ARG-715</scope>
</reference>
<reference key="6">
    <citation type="journal article" date="2008" name="Proc. Natl. Acad. Sci. U.S.A.">
        <title>A quantitative atlas of mitotic phosphorylation.</title>
        <authorList>
            <person name="Dephoure N."/>
            <person name="Zhou C."/>
            <person name="Villen J."/>
            <person name="Beausoleil S.A."/>
            <person name="Bakalarski C.E."/>
            <person name="Elledge S.J."/>
            <person name="Gygi S.P."/>
        </authorList>
    </citation>
    <scope>IDENTIFICATION BY MASS SPECTROMETRY [LARGE SCALE ANALYSIS]</scope>
    <source>
        <tissue>Cervix carcinoma</tissue>
    </source>
</reference>
<reference key="7">
    <citation type="journal article" date="2009" name="Anal. Chem.">
        <title>Lys-N and trypsin cover complementary parts of the phosphoproteome in a refined SCX-based approach.</title>
        <authorList>
            <person name="Gauci S."/>
            <person name="Helbig A.O."/>
            <person name="Slijper M."/>
            <person name="Krijgsveld J."/>
            <person name="Heck A.J."/>
            <person name="Mohammed S."/>
        </authorList>
    </citation>
    <scope>ACETYLATION [LARGE SCALE ANALYSIS] AT SER-2</scope>
    <scope>CLEAVAGE OF INITIATOR METHIONINE [LARGE SCALE ANALYSIS]</scope>
    <scope>IDENTIFICATION BY MASS SPECTROMETRY [LARGE SCALE ANALYSIS]</scope>
</reference>
<reference key="8">
    <citation type="journal article" date="2009" name="J. Biol. Chem.">
        <title>The sterol-sensing endoplasmic reticulum (ER) membrane protein TRC8 hampers ER to Golgi transport of sterol regulatory element-binding protein-2 (SREBP-2)/SREBP cleavage-activated protein and reduces SREBP-2 cleavage.</title>
        <authorList>
            <person name="Irisawa M."/>
            <person name="Inoue J."/>
            <person name="Ozawa N."/>
            <person name="Mori K."/>
            <person name="Sato R."/>
        </authorList>
    </citation>
    <scope>INTERACTION WITH RNF139</scope>
</reference>
<reference key="9">
    <citation type="journal article" date="2009" name="Sci. Signal.">
        <title>Quantitative phosphoproteomic analysis of T cell receptor signaling reveals system-wide modulation of protein-protein interactions.</title>
        <authorList>
            <person name="Mayya V."/>
            <person name="Lundgren D.H."/>
            <person name="Hwang S.-I."/>
            <person name="Rezaul K."/>
            <person name="Wu L."/>
            <person name="Eng J.K."/>
            <person name="Rodionov V."/>
            <person name="Han D.K."/>
        </authorList>
    </citation>
    <scope>IDENTIFICATION BY MASS SPECTROMETRY [LARGE SCALE ANALYSIS]</scope>
    <source>
        <tissue>Leukemic T-cell</tissue>
    </source>
</reference>
<reference key="10">
    <citation type="journal article" date="2010" name="J. Cell Sci.">
        <title>Selective export of human GPI-anchored proteins from the endoplasmic reticulum.</title>
        <authorList>
            <person name="Bonnon C."/>
            <person name="Wendeler M.W."/>
            <person name="Paccaud J.P."/>
            <person name="Hauri H.P."/>
        </authorList>
    </citation>
    <scope>FUNCTION</scope>
    <scope>INTERACTION WITH TMED2 AND TMED10</scope>
</reference>
<reference key="11">
    <citation type="journal article" date="2011" name="BMC Syst. Biol.">
        <title>Initial characterization of the human central proteome.</title>
        <authorList>
            <person name="Burkard T.R."/>
            <person name="Planyavsky M."/>
            <person name="Kaupe I."/>
            <person name="Breitwieser F.P."/>
            <person name="Buerckstuemmer T."/>
            <person name="Bennett K.L."/>
            <person name="Superti-Furga G."/>
            <person name="Colinge J."/>
        </authorList>
    </citation>
    <scope>IDENTIFICATION BY MASS SPECTROMETRY [LARGE SCALE ANALYSIS]</scope>
</reference>
<reference key="12">
    <citation type="journal article" date="2013" name="J. Proteome Res.">
        <title>Toward a comprehensive characterization of a human cancer cell phosphoproteome.</title>
        <authorList>
            <person name="Zhou H."/>
            <person name="Di Palma S."/>
            <person name="Preisinger C."/>
            <person name="Peng M."/>
            <person name="Polat A.N."/>
            <person name="Heck A.J."/>
            <person name="Mohammed S."/>
        </authorList>
    </citation>
    <scope>PHOSPHORYLATION [LARGE SCALE ANALYSIS] AT THR-329 AND SER-1224</scope>
    <scope>IDENTIFICATION BY MASS SPECTROMETRY [LARGE SCALE ANALYSIS]</scope>
    <source>
        <tissue>Cervix carcinoma</tissue>
        <tissue>Erythroleukemia</tissue>
    </source>
</reference>
<reference key="13">
    <citation type="journal article" date="2014" name="J. Proteomics">
        <title>An enzyme assisted RP-RPLC approach for in-depth analysis of human liver phosphoproteome.</title>
        <authorList>
            <person name="Bian Y."/>
            <person name="Song C."/>
            <person name="Cheng K."/>
            <person name="Dong M."/>
            <person name="Wang F."/>
            <person name="Huang J."/>
            <person name="Sun D."/>
            <person name="Wang L."/>
            <person name="Ye M."/>
            <person name="Zou H."/>
        </authorList>
    </citation>
    <scope>PHOSPHORYLATION [LARGE SCALE ANALYSIS] AT SER-1224</scope>
    <scope>PHOSPHORYLATION [LARGE SCALE ANALYSIS] AT SER-55 (ISOFORM 3)</scope>
    <scope>IDENTIFICATION BY MASS SPECTROMETRY [LARGE SCALE ANALYSIS]</scope>
    <source>
        <tissue>Liver</tissue>
    </source>
</reference>
<reference key="14">
    <citation type="journal article" date="2014" name="Traffic">
        <title>CNIH4 interacts with newly synthesized GPCR and controls their export from the endoplasmic reticulum.</title>
        <authorList>
            <person name="Sauvageau E."/>
            <person name="Rochdi M.D."/>
            <person name="Oueslati M."/>
            <person name="Hamdan F.F."/>
            <person name="Percherancier Y."/>
            <person name="Simpson J.C."/>
            <person name="Pepperkok R."/>
            <person name="Bouvier M."/>
        </authorList>
    </citation>
    <scope>INTERACTION WITH CNIH4</scope>
</reference>
<reference evidence="14" key="15">
    <citation type="journal article" date="2008" name="EMBO J.">
        <title>Structural basis of cargo membrane protein discrimination by the human COPII coat machinery.</title>
        <authorList>
            <person name="Mancias J.D."/>
            <person name="Goldberg J."/>
        </authorList>
    </citation>
    <scope>X-RAY CRYSTALLOGRAPHY (1.80 ANGSTROMS) OF 518-1268 IN COMPLEX WITH ZINC</scope>
    <scope>FUNCTION</scope>
</reference>
<reference key="16">
    <citation type="journal article" date="2020" name="Nat. Immunol.">
        <title>STEEP mediates STING ER exit and activation of signaling.</title>
        <authorList>
            <person name="Zhang B.C."/>
            <person name="Nandakumar R."/>
            <person name="Reinert L.S."/>
            <person name="Huang J."/>
            <person name="Laustsen A."/>
            <person name="Gao Z.L."/>
            <person name="Sun C.L."/>
            <person name="Jensen S.B."/>
            <person name="Troldborg A."/>
            <person name="Assil S."/>
            <person name="Berthelsen M.F."/>
            <person name="Scavenius C."/>
            <person name="Zhang Y."/>
            <person name="Windross S.J."/>
            <person name="Olagnier D."/>
            <person name="Prabakaran T."/>
            <person name="Bodda C."/>
            <person name="Narita R."/>
            <person name="Cai Y."/>
            <person name="Zhang C.G."/>
            <person name="Stenmark H."/>
            <person name="Doucet C.M."/>
            <person name="Noda T."/>
            <person name="Guo Z."/>
            <person name="Goldbach-Mansky R."/>
            <person name="Hartmann R."/>
            <person name="Chen Z.J."/>
            <person name="Enghild J.J."/>
            <person name="Bak R.O."/>
            <person name="Thomsen M.K."/>
            <person name="Paludan S.R."/>
        </authorList>
    </citation>
    <scope>INTERACTION WITH STING1</scope>
</reference>
<reference key="17">
    <citation type="journal article" date="2020" name="Nat. Immunol.">
        <authorList>
            <person name="Zhang B.C."/>
            <person name="Nandakumar R."/>
            <person name="Reinert L.S."/>
            <person name="Huang J."/>
            <person name="Laustsen A."/>
            <person name="Gao Z.L."/>
            <person name="Sun C.L."/>
            <person name="Jensen S.B."/>
            <person name="Troldborg A."/>
            <person name="Assil S."/>
            <person name="Berthelsen M.F."/>
            <person name="Scavenius C."/>
            <person name="Zhang Y."/>
            <person name="Windross S.J."/>
            <person name="Olagnier D."/>
            <person name="Prabakaran T."/>
            <person name="Bodda C."/>
            <person name="Narita R."/>
            <person name="Cai Y."/>
            <person name="Zhang C.G."/>
            <person name="Stenmark H."/>
            <person name="Doucet C.M."/>
            <person name="Noda T."/>
            <person name="Guo Z."/>
            <person name="Goldbach-Mansky R."/>
            <person name="Hartmann R."/>
            <person name="Chen Z.J."/>
            <person name="Enghild J.J."/>
            <person name="Bak R.O."/>
            <person name="Thomsen M.K."/>
            <person name="Paludan S.R."/>
        </authorList>
    </citation>
    <scope>ERRATUM OF PUBMED:32690950</scope>
</reference>
<proteinExistence type="evidence at protein level"/>
<comment type="function">
    <text evidence="4 5 7">Component of the coat protein complex II (COPII) which promotes the formation of transport vesicles from the endoplasmic reticulum (ER). The coat has two main functions, the physical deformation of the endoplasmic reticulum membrane into vesicles and the selection of cargo molecules for their transport to the Golgi complex (PubMed:17499046, PubMed:18843296, PubMed:20427317). Plays a central role in cargo selection within the COPII complex and together with SEC24A may have a different specificity compared to SEC24C and SEC24D. May package preferentially cargos with cytoplasmic DxE or LxxLE motifs and may also recognize conformational epitopes (PubMed:17499046, PubMed:18843296).</text>
</comment>
<comment type="subunit">
    <text evidence="3 4 6 7 8 9">COPII is composed of at least five proteins: the Sec23/24 complex, the Sec13/31 complex and SAR1 (PubMed:10075675, PubMed:17499046). Interacts with STING1; promoting STING1 translocation to COPII vesicles in a STEEP1-dependent manner (PubMed:32690950). Interacts with RNF139 (PubMed:19706601). Interacts with TMED2 and TMED10 (PubMed:20427317). Interacts with CNIH4 (PubMed:24405750).</text>
</comment>
<comment type="interaction">
    <interactant intactId="EBI-81101">
        <id>O95487</id>
    </interactant>
    <interactant intactId="EBI-81088">
        <id>Q15436</id>
        <label>SEC23A</label>
    </interactant>
    <organismsDiffer>false</organismsDiffer>
    <experiments>4</experiments>
</comment>
<comment type="subcellular location">
    <subcellularLocation>
        <location evidence="3">Cytoplasmic vesicle</location>
        <location evidence="3">COPII-coated vesicle membrane</location>
        <topology evidence="12">Peripheral membrane protein</topology>
        <orientation evidence="12">Cytoplasmic side</orientation>
    </subcellularLocation>
    <subcellularLocation>
        <location evidence="3">Endoplasmic reticulum membrane</location>
        <topology evidence="3">Peripheral membrane protein</topology>
        <orientation evidence="3">Cytoplasmic side</orientation>
    </subcellularLocation>
    <subcellularLocation>
        <location evidence="3">Cytoplasm</location>
        <location evidence="3">Cytosol</location>
    </subcellularLocation>
</comment>
<comment type="alternative products">
    <event type="alternative splicing"/>
    <isoform>
        <id>O95487-1</id>
        <name>1</name>
        <sequence type="displayed"/>
    </isoform>
    <isoform>
        <id>O95487-2</id>
        <name>2</name>
        <sequence type="described" ref="VSP_035987"/>
    </isoform>
    <isoform>
        <id>O95487-3</id>
        <name>3</name>
        <sequence type="described" ref="VSP_054432 VSP_054433"/>
    </isoform>
</comment>
<comment type="similarity">
    <text evidence="11">Belongs to the SEC23/SEC24 family. SEC24 subfamily.</text>
</comment>
<comment type="sequence caution" evidence="11">
    <conflict type="frameshift">
        <sequence resource="EMBL-CDS" id="CAA10335"/>
    </conflict>
</comment>
<gene>
    <name evidence="13" type="primary">SEC24B</name>
</gene>
<sequence>MSAPAGSSHPAASARIPPKFGGAAVSGAAAPAGPGAGPAPHQQNGPAQNQMQVPSGYGLHHQNYIAPSGHYSQGPGKMTSLPLDTQCGDYYSALYTVPTQNVTPNTVNQQPGAQQLYSRGPPAPHIVGSTLGSFQGAASSASHLHTSASQPYSSFVNHYNSPAMYSASSSVASQGFPSTCGHYAMSTVSNAAYPSVSYPSLPAGDTYGQMFTSQNAPTVRPVKDNSFSGQNTAISHPSPLPPLPSQQHHQQQSLSGYSTLTWSSPGLPSTQDNLIRNHTGSLAVANNNPTITVADSLSCPVMQNVQPPKSSPVVSTVLSGSSGSSSTRTPPTANHPVEPVTSVTQPSELLQQKGVQYGEYVNNQASSAPTPLSSTSDDEEEEEEDEEAGVDSSSTTSSASPMPNSYDALEGGSYPDMLSSSASSPAPDPAPEPDPASAPAPASAPAPVVPQPSKMAKPFGYGYPTLQPGYQNATAPLISGVQPSNPVYSGFQQYPQQYPGVNQLSSSIGGLSLQSSPQPESLRPVNLTQERNILPMTPVWAPVPNLNADLKKLNCSPDSFRCTLTNIPQTQALLNKAKLPLGLLLHPFRDLTQLPVITSNTIVRCRSCRTYINPFVSFIDQRRWKCNLCYRVNDVPEEFMYNPLTRSYGEPHKRPEVQNSTVEFIASSDYMLRPPQPAVYLFVLDVSHNAVEAGYLTILCQSLLENLDKLPGDSRTRIGFMTFDSTIHFYNLQEGLSQPQMLIVSDIDDVFLPTPDSLLVNLYESKELIKDLLNALPNMFTNTRETHSALGPALQAAFKLMSPTGGRVSVFQTQLPSLGAGLLQSREDPNQRSSTKVVQHLGPATDFYKKLALDCSGQQTAVDLFLLSSQYSDLASLACMSKYSAGCIYYYPSFHYTHNPSQAEKLQKDLKRYLTRKIGFEAVMRIRCTKGLSMHTFHGNFFVRSTDLLSLANINPDAGFAVQLSIEESLTDTSLVCFQTALLYTSSKGERRIRVHTLCLPVVSSLADVYAGVDVQAAICLLANMAVDRSVSSSLSDARDALVNAVVDSLSAYGSTVSNLQHSALMAPSSLKLFPLYVLALLKQKAFRTGTSTRLDDRVYAMCQIKSQPLVHLMKMIHPNLYRIDRLTDEGAVHVNDRIVPQPPLQKLSAEKLTREGAFLMDCGSVFYIWVGKGCDNNFIEDVLGYTNFASIPQKMTHLPELDTLSSERARSFITWLRDSRPLSPILHIVKDESPAKAEFFQHLIEDRTEAAFSYYEFLLHVQQQICK</sequence>